<evidence type="ECO:0000305" key="1"/>
<reference key="1">
    <citation type="journal article" date="2004" name="Nat. Genet.">
        <title>Complete sequencing and characterization of 21,243 full-length human cDNAs.</title>
        <authorList>
            <person name="Ota T."/>
            <person name="Suzuki Y."/>
            <person name="Nishikawa T."/>
            <person name="Otsuki T."/>
            <person name="Sugiyama T."/>
            <person name="Irie R."/>
            <person name="Wakamatsu A."/>
            <person name="Hayashi K."/>
            <person name="Sato H."/>
            <person name="Nagai K."/>
            <person name="Kimura K."/>
            <person name="Makita H."/>
            <person name="Sekine M."/>
            <person name="Obayashi M."/>
            <person name="Nishi T."/>
            <person name="Shibahara T."/>
            <person name="Tanaka T."/>
            <person name="Ishii S."/>
            <person name="Yamamoto J."/>
            <person name="Saito K."/>
            <person name="Kawai Y."/>
            <person name="Isono Y."/>
            <person name="Nakamura Y."/>
            <person name="Nagahari K."/>
            <person name="Murakami K."/>
            <person name="Yasuda T."/>
            <person name="Iwayanagi T."/>
            <person name="Wagatsuma M."/>
            <person name="Shiratori A."/>
            <person name="Sudo H."/>
            <person name="Hosoiri T."/>
            <person name="Kaku Y."/>
            <person name="Kodaira H."/>
            <person name="Kondo H."/>
            <person name="Sugawara M."/>
            <person name="Takahashi M."/>
            <person name="Kanda K."/>
            <person name="Yokoi T."/>
            <person name="Furuya T."/>
            <person name="Kikkawa E."/>
            <person name="Omura Y."/>
            <person name="Abe K."/>
            <person name="Kamihara K."/>
            <person name="Katsuta N."/>
            <person name="Sato K."/>
            <person name="Tanikawa M."/>
            <person name="Yamazaki M."/>
            <person name="Ninomiya K."/>
            <person name="Ishibashi T."/>
            <person name="Yamashita H."/>
            <person name="Murakawa K."/>
            <person name="Fujimori K."/>
            <person name="Tanai H."/>
            <person name="Kimata M."/>
            <person name="Watanabe M."/>
            <person name="Hiraoka S."/>
            <person name="Chiba Y."/>
            <person name="Ishida S."/>
            <person name="Ono Y."/>
            <person name="Takiguchi S."/>
            <person name="Watanabe S."/>
            <person name="Yosida M."/>
            <person name="Hotuta T."/>
            <person name="Kusano J."/>
            <person name="Kanehori K."/>
            <person name="Takahashi-Fujii A."/>
            <person name="Hara H."/>
            <person name="Tanase T.-O."/>
            <person name="Nomura Y."/>
            <person name="Togiya S."/>
            <person name="Komai F."/>
            <person name="Hara R."/>
            <person name="Takeuchi K."/>
            <person name="Arita M."/>
            <person name="Imose N."/>
            <person name="Musashino K."/>
            <person name="Yuuki H."/>
            <person name="Oshima A."/>
            <person name="Sasaki N."/>
            <person name="Aotsuka S."/>
            <person name="Yoshikawa Y."/>
            <person name="Matsunawa H."/>
            <person name="Ichihara T."/>
            <person name="Shiohata N."/>
            <person name="Sano S."/>
            <person name="Moriya S."/>
            <person name="Momiyama H."/>
            <person name="Satoh N."/>
            <person name="Takami S."/>
            <person name="Terashima Y."/>
            <person name="Suzuki O."/>
            <person name="Nakagawa S."/>
            <person name="Senoh A."/>
            <person name="Mizoguchi H."/>
            <person name="Goto Y."/>
            <person name="Shimizu F."/>
            <person name="Wakebe H."/>
            <person name="Hishigaki H."/>
            <person name="Watanabe T."/>
            <person name="Sugiyama A."/>
            <person name="Takemoto M."/>
            <person name="Kawakami B."/>
            <person name="Yamazaki M."/>
            <person name="Watanabe K."/>
            <person name="Kumagai A."/>
            <person name="Itakura S."/>
            <person name="Fukuzumi Y."/>
            <person name="Fujimori Y."/>
            <person name="Komiyama M."/>
            <person name="Tashiro H."/>
            <person name="Tanigami A."/>
            <person name="Fujiwara T."/>
            <person name="Ono T."/>
            <person name="Yamada K."/>
            <person name="Fujii Y."/>
            <person name="Ozaki K."/>
            <person name="Hirao M."/>
            <person name="Ohmori Y."/>
            <person name="Kawabata A."/>
            <person name="Hikiji T."/>
            <person name="Kobatake N."/>
            <person name="Inagaki H."/>
            <person name="Ikema Y."/>
            <person name="Okamoto S."/>
            <person name="Okitani R."/>
            <person name="Kawakami T."/>
            <person name="Noguchi S."/>
            <person name="Itoh T."/>
            <person name="Shigeta K."/>
            <person name="Senba T."/>
            <person name="Matsumura K."/>
            <person name="Nakajima Y."/>
            <person name="Mizuno T."/>
            <person name="Morinaga M."/>
            <person name="Sasaki M."/>
            <person name="Togashi T."/>
            <person name="Oyama M."/>
            <person name="Hata H."/>
            <person name="Watanabe M."/>
            <person name="Komatsu T."/>
            <person name="Mizushima-Sugano J."/>
            <person name="Satoh T."/>
            <person name="Shirai Y."/>
            <person name="Takahashi Y."/>
            <person name="Nakagawa K."/>
            <person name="Okumura K."/>
            <person name="Nagase T."/>
            <person name="Nomura N."/>
            <person name="Kikuchi H."/>
            <person name="Masuho Y."/>
            <person name="Yamashita R."/>
            <person name="Nakai K."/>
            <person name="Yada T."/>
            <person name="Nakamura Y."/>
            <person name="Ohara O."/>
            <person name="Isogai T."/>
            <person name="Sugano S."/>
        </authorList>
    </citation>
    <scope>NUCLEOTIDE SEQUENCE [LARGE SCALE MRNA]</scope>
    <source>
        <tissue>Liver</tissue>
    </source>
</reference>
<reference key="2">
    <citation type="journal article" date="2005" name="Nature">
        <title>DNA sequence and analysis of human chromosome 18.</title>
        <authorList>
            <person name="Nusbaum C."/>
            <person name="Zody M.C."/>
            <person name="Borowsky M.L."/>
            <person name="Kamal M."/>
            <person name="Kodira C.D."/>
            <person name="Taylor T.D."/>
            <person name="Whittaker C.A."/>
            <person name="Chang J.L."/>
            <person name="Cuomo C.A."/>
            <person name="Dewar K."/>
            <person name="FitzGerald M.G."/>
            <person name="Yang X."/>
            <person name="Abouelleil A."/>
            <person name="Allen N.R."/>
            <person name="Anderson S."/>
            <person name="Bloom T."/>
            <person name="Bugalter B."/>
            <person name="Butler J."/>
            <person name="Cook A."/>
            <person name="DeCaprio D."/>
            <person name="Engels R."/>
            <person name="Garber M."/>
            <person name="Gnirke A."/>
            <person name="Hafez N."/>
            <person name="Hall J.L."/>
            <person name="Norman C.H."/>
            <person name="Itoh T."/>
            <person name="Jaffe D.B."/>
            <person name="Kuroki Y."/>
            <person name="Lehoczky J."/>
            <person name="Lui A."/>
            <person name="Macdonald P."/>
            <person name="Mauceli E."/>
            <person name="Mikkelsen T.S."/>
            <person name="Naylor J.W."/>
            <person name="Nicol R."/>
            <person name="Nguyen C."/>
            <person name="Noguchi H."/>
            <person name="O'Leary S.B."/>
            <person name="Piqani B."/>
            <person name="Smith C.L."/>
            <person name="Talamas J.A."/>
            <person name="Topham K."/>
            <person name="Totoki Y."/>
            <person name="Toyoda A."/>
            <person name="Wain H.M."/>
            <person name="Young S.K."/>
            <person name="Zeng Q."/>
            <person name="Zimmer A.R."/>
            <person name="Fujiyama A."/>
            <person name="Hattori M."/>
            <person name="Birren B.W."/>
            <person name="Sakaki Y."/>
            <person name="Lander E.S."/>
        </authorList>
    </citation>
    <scope>NUCLEOTIDE SEQUENCE [LARGE SCALE GENOMIC DNA]</scope>
</reference>
<reference key="3">
    <citation type="submission" date="2005-09" db="EMBL/GenBank/DDBJ databases">
        <authorList>
            <person name="Mural R.J."/>
            <person name="Istrail S."/>
            <person name="Sutton G.G."/>
            <person name="Florea L."/>
            <person name="Halpern A.L."/>
            <person name="Mobarry C.M."/>
            <person name="Lippert R."/>
            <person name="Walenz B."/>
            <person name="Shatkay H."/>
            <person name="Dew I."/>
            <person name="Miller J.R."/>
            <person name="Flanigan M.J."/>
            <person name="Edwards N.J."/>
            <person name="Bolanos R."/>
            <person name="Fasulo D."/>
            <person name="Halldorsson B.V."/>
            <person name="Hannenhalli S."/>
            <person name="Turner R."/>
            <person name="Yooseph S."/>
            <person name="Lu F."/>
            <person name="Nusskern D.R."/>
            <person name="Shue B.C."/>
            <person name="Zheng X.H."/>
            <person name="Zhong F."/>
            <person name="Delcher A.L."/>
            <person name="Huson D.H."/>
            <person name="Kravitz S.A."/>
            <person name="Mouchard L."/>
            <person name="Reinert K."/>
            <person name="Remington K.A."/>
            <person name="Clark A.G."/>
            <person name="Waterman M.S."/>
            <person name="Eichler E.E."/>
            <person name="Adams M.D."/>
            <person name="Hunkapiller M.W."/>
            <person name="Myers E.W."/>
            <person name="Venter J.C."/>
        </authorList>
    </citation>
    <scope>NUCLEOTIDE SEQUENCE [LARGE SCALE GENOMIC DNA]</scope>
</reference>
<reference key="4">
    <citation type="journal article" date="2004" name="Genome Res.">
        <title>The status, quality, and expansion of the NIH full-length cDNA project: the Mammalian Gene Collection (MGC).</title>
        <authorList>
            <consortium name="The MGC Project Team"/>
        </authorList>
    </citation>
    <scope>NUCLEOTIDE SEQUENCE [LARGE SCALE MRNA]</scope>
    <source>
        <tissue>Cervix</tissue>
    </source>
</reference>
<dbReference type="EMBL" id="AK292743">
    <property type="protein sequence ID" value="BAF85432.1"/>
    <property type="molecule type" value="mRNA"/>
</dbReference>
<dbReference type="EMBL" id="AP001496">
    <property type="status" value="NOT_ANNOTATED_CDS"/>
    <property type="molecule type" value="Genomic_DNA"/>
</dbReference>
<dbReference type="EMBL" id="CH471113">
    <property type="protein sequence ID" value="EAX01649.1"/>
    <property type="molecule type" value="Genomic_DNA"/>
</dbReference>
<dbReference type="EMBL" id="BC010538">
    <property type="status" value="NOT_ANNOTATED_CDS"/>
    <property type="molecule type" value="mRNA"/>
</dbReference>
<dbReference type="IntAct" id="Q96FQ7">
    <property type="interactions" value="7"/>
</dbReference>
<dbReference type="iPTMnet" id="Q96FQ7"/>
<dbReference type="PhosphoSitePlus" id="Q96FQ7"/>
<dbReference type="BioMuta" id="HGNC:28278"/>
<dbReference type="MassIVE" id="Q96FQ7"/>
<dbReference type="PeptideAtlas" id="Q96FQ7"/>
<dbReference type="AGR" id="HGNC:28278"/>
<dbReference type="GeneCards" id="LINC00526"/>
<dbReference type="HGNC" id="HGNC:28278">
    <property type="gene designation" value="LINC00526"/>
</dbReference>
<dbReference type="neXtProt" id="NX_Q96FQ7"/>
<dbReference type="InParanoid" id="Q96FQ7"/>
<dbReference type="PAN-GO" id="Q96FQ7">
    <property type="GO annotations" value="0 GO annotations based on evolutionary models"/>
</dbReference>
<dbReference type="PhylomeDB" id="Q96FQ7"/>
<dbReference type="PathwayCommons" id="Q96FQ7"/>
<dbReference type="SignaLink" id="Q96FQ7"/>
<dbReference type="Pharos" id="Q96FQ7">
    <property type="development level" value="Tdark"/>
</dbReference>
<dbReference type="Proteomes" id="UP000005640">
    <property type="component" value="Unplaced"/>
</dbReference>
<dbReference type="RNAct" id="Q96FQ7">
    <property type="molecule type" value="protein"/>
</dbReference>
<keyword id="KW-1267">Proteomics identification</keyword>
<keyword id="KW-1185">Reference proteome</keyword>
<proteinExistence type="uncertain"/>
<feature type="chain" id="PRO_0000079310" description="Putative uncharacterized protein encoded by LINC00526">
    <location>
        <begin position="1"/>
        <end position="95"/>
    </location>
</feature>
<feature type="sequence variant" id="VAR_050902" description="In dbSNP:rs7242964.">
    <original>P</original>
    <variation>A</variation>
    <location>
        <position position="16"/>
    </location>
</feature>
<organism>
    <name type="scientific">Homo sapiens</name>
    <name type="common">Human</name>
    <dbReference type="NCBI Taxonomy" id="9606"/>
    <lineage>
        <taxon>Eukaryota</taxon>
        <taxon>Metazoa</taxon>
        <taxon>Chordata</taxon>
        <taxon>Craniata</taxon>
        <taxon>Vertebrata</taxon>
        <taxon>Euteleostomi</taxon>
        <taxon>Mammalia</taxon>
        <taxon>Eutheria</taxon>
        <taxon>Euarchontoglires</taxon>
        <taxon>Primates</taxon>
        <taxon>Haplorrhini</taxon>
        <taxon>Catarrhini</taxon>
        <taxon>Hominidae</taxon>
        <taxon>Homo</taxon>
    </lineage>
</organism>
<accession>Q96FQ7</accession>
<accession>A8K9M8</accession>
<sequence>MSHSYKKAISDEALRPFQMDYFGGLPPGQYATRMTGQVHGSGCHLRSAPCDLGASQRKLSSNFSEIDAGLFSQGKSAAYTDIGATKPVEQRETAS</sequence>
<name>CR018_HUMAN</name>
<gene>
    <name type="primary">LINC00526</name>
    <name type="synonym">C18orf18</name>
</gene>
<comment type="interaction">
    <interactant intactId="EBI-10286106">
        <id>Q96FQ7</id>
    </interactant>
    <interactant intactId="EBI-2808286">
        <id>Q2TAC2</id>
        <label>CCDC57</label>
    </interactant>
    <organismsDiffer>false</organismsDiffer>
    <experiments>3</experiments>
</comment>
<comment type="interaction">
    <interactant intactId="EBI-10286106">
        <id>Q96FQ7</id>
    </interactant>
    <interactant intactId="EBI-948001">
        <id>Q15323</id>
        <label>KRT31</label>
    </interactant>
    <organismsDiffer>false</organismsDiffer>
    <experiments>3</experiments>
</comment>
<comment type="interaction">
    <interactant intactId="EBI-10286106">
        <id>Q96FQ7</id>
    </interactant>
    <interactant intactId="EBI-945833">
        <id>Q7Z3S9</id>
        <label>NOTCH2NLA</label>
    </interactant>
    <organismsDiffer>false</organismsDiffer>
    <experiments>3</experiments>
</comment>
<comment type="interaction">
    <interactant intactId="EBI-10286106">
        <id>Q96FQ7</id>
    </interactant>
    <interactant intactId="EBI-717810">
        <id>Q08117</id>
        <label>TLE5</label>
    </interactant>
    <organismsDiffer>false</organismsDiffer>
    <experiments>3</experiments>
</comment>
<comment type="interaction">
    <interactant intactId="EBI-10286106">
        <id>Q96FQ7</id>
    </interactant>
    <interactant intactId="EBI-740098">
        <id>P36406</id>
        <label>TRIM23</label>
    </interactant>
    <organismsDiffer>false</organismsDiffer>
    <experiments>3</experiments>
</comment>
<comment type="interaction">
    <interactant intactId="EBI-10286106">
        <id>Q96FQ7</id>
    </interactant>
    <interactant intactId="EBI-719493">
        <id>P14373</id>
        <label>TRIM27</label>
    </interactant>
    <organismsDiffer>false</organismsDiffer>
    <experiments>3</experiments>
</comment>
<comment type="interaction">
    <interactant intactId="EBI-10286106">
        <id>Q96FQ7</id>
    </interactant>
    <interactant intactId="EBI-739895">
        <id>Q8N6Y0</id>
        <label>USHBP1</label>
    </interactant>
    <organismsDiffer>false</organismsDiffer>
    <experiments>3</experiments>
</comment>
<comment type="caution">
    <text evidence="1">Product of a dubious gene prediction.</text>
</comment>
<protein>
    <recommendedName>
        <fullName>Putative uncharacterized protein encoded by LINC00526</fullName>
    </recommendedName>
</protein>